<comment type="similarity">
    <text evidence="2">Belongs to the UPF0758 family.</text>
</comment>
<name>Y1264_STACT</name>
<accession>B9DNE3</accession>
<keyword id="KW-0378">Hydrolase</keyword>
<keyword id="KW-0479">Metal-binding</keyword>
<keyword id="KW-0482">Metalloprotease</keyword>
<keyword id="KW-0645">Protease</keyword>
<keyword id="KW-1185">Reference proteome</keyword>
<keyword id="KW-0862">Zinc</keyword>
<gene>
    <name type="ordered locus">Sca_1264</name>
</gene>
<proteinExistence type="inferred from homology"/>
<protein>
    <recommendedName>
        <fullName>UPF0758 protein Sca_1264</fullName>
    </recommendedName>
</protein>
<reference key="1">
    <citation type="journal article" date="2009" name="Appl. Environ. Microbiol.">
        <title>Genome analysis of the meat starter culture bacterium Staphylococcus carnosus TM300.</title>
        <authorList>
            <person name="Rosenstein R."/>
            <person name="Nerz C."/>
            <person name="Biswas L."/>
            <person name="Resch A."/>
            <person name="Raddatz G."/>
            <person name="Schuster S.C."/>
            <person name="Goetz F."/>
        </authorList>
    </citation>
    <scope>NUCLEOTIDE SEQUENCE [LARGE SCALE GENOMIC DNA]</scope>
    <source>
        <strain>TM300</strain>
    </source>
</reference>
<evidence type="ECO:0000255" key="1">
    <source>
        <dbReference type="PROSITE-ProRule" id="PRU01182"/>
    </source>
</evidence>
<evidence type="ECO:0000305" key="2"/>
<dbReference type="EMBL" id="AM295250">
    <property type="protein sequence ID" value="CAL28171.1"/>
    <property type="molecule type" value="Genomic_DNA"/>
</dbReference>
<dbReference type="RefSeq" id="WP_015900511.1">
    <property type="nucleotide sequence ID" value="NC_012121.1"/>
</dbReference>
<dbReference type="SMR" id="B9DNE3"/>
<dbReference type="GeneID" id="93793690"/>
<dbReference type="KEGG" id="sca:SCA_1264"/>
<dbReference type="eggNOG" id="COG2003">
    <property type="taxonomic scope" value="Bacteria"/>
</dbReference>
<dbReference type="HOGENOM" id="CLU_073529_0_2_9"/>
<dbReference type="OrthoDB" id="9804482at2"/>
<dbReference type="BioCyc" id="SCAR396513:SCA_RS06315-MONOMER"/>
<dbReference type="Proteomes" id="UP000000444">
    <property type="component" value="Chromosome"/>
</dbReference>
<dbReference type="GO" id="GO:0046872">
    <property type="term" value="F:metal ion binding"/>
    <property type="evidence" value="ECO:0007669"/>
    <property type="project" value="UniProtKB-KW"/>
</dbReference>
<dbReference type="GO" id="GO:0008237">
    <property type="term" value="F:metallopeptidase activity"/>
    <property type="evidence" value="ECO:0007669"/>
    <property type="project" value="UniProtKB-KW"/>
</dbReference>
<dbReference type="GO" id="GO:0006508">
    <property type="term" value="P:proteolysis"/>
    <property type="evidence" value="ECO:0007669"/>
    <property type="project" value="UniProtKB-KW"/>
</dbReference>
<dbReference type="CDD" id="cd08071">
    <property type="entry name" value="MPN_DUF2466"/>
    <property type="match status" value="1"/>
</dbReference>
<dbReference type="Gene3D" id="3.40.140.10">
    <property type="entry name" value="Cytidine Deaminase, domain 2"/>
    <property type="match status" value="1"/>
</dbReference>
<dbReference type="InterPro" id="IPR037518">
    <property type="entry name" value="MPN"/>
</dbReference>
<dbReference type="InterPro" id="IPR025657">
    <property type="entry name" value="RadC_JAB"/>
</dbReference>
<dbReference type="InterPro" id="IPR010994">
    <property type="entry name" value="RuvA_2-like"/>
</dbReference>
<dbReference type="InterPro" id="IPR001405">
    <property type="entry name" value="UPF0758"/>
</dbReference>
<dbReference type="InterPro" id="IPR020891">
    <property type="entry name" value="UPF0758_CS"/>
</dbReference>
<dbReference type="InterPro" id="IPR046778">
    <property type="entry name" value="UPF0758_N"/>
</dbReference>
<dbReference type="NCBIfam" id="NF000642">
    <property type="entry name" value="PRK00024.1"/>
    <property type="match status" value="1"/>
</dbReference>
<dbReference type="NCBIfam" id="TIGR00608">
    <property type="entry name" value="radc"/>
    <property type="match status" value="1"/>
</dbReference>
<dbReference type="PANTHER" id="PTHR30471">
    <property type="entry name" value="DNA REPAIR PROTEIN RADC"/>
    <property type="match status" value="1"/>
</dbReference>
<dbReference type="PANTHER" id="PTHR30471:SF3">
    <property type="entry name" value="UPF0758 PROTEIN YEES-RELATED"/>
    <property type="match status" value="1"/>
</dbReference>
<dbReference type="Pfam" id="PF04002">
    <property type="entry name" value="RadC"/>
    <property type="match status" value="1"/>
</dbReference>
<dbReference type="Pfam" id="PF20582">
    <property type="entry name" value="UPF0758_N"/>
    <property type="match status" value="1"/>
</dbReference>
<dbReference type="SUPFAM" id="SSF102712">
    <property type="entry name" value="JAB1/MPN domain"/>
    <property type="match status" value="1"/>
</dbReference>
<dbReference type="SUPFAM" id="SSF47781">
    <property type="entry name" value="RuvA domain 2-like"/>
    <property type="match status" value="1"/>
</dbReference>
<dbReference type="PROSITE" id="PS50249">
    <property type="entry name" value="MPN"/>
    <property type="match status" value="1"/>
</dbReference>
<dbReference type="PROSITE" id="PS01302">
    <property type="entry name" value="UPF0758"/>
    <property type="match status" value="1"/>
</dbReference>
<sequence length="226" mass="25250">MMIKQLPENDKPKEKLIAKGAAHLADSELLAILINTGRKGHSSIEVAQDLIKMARSLKELKLLSLNDIMKVKGIGLNKAIILKAAFELGERMYIPDLDTKVKITSPQDAADYFLSRMMHLTHEQFEVLFLNSKNVVIRHEVIFVGTLNSSIVHPREVFKAAIKWSSNAIIVVHNHPSGDVTPSKEDILTTKRLQECGRVLGIELLDHIIIGDAKYLSMVEGGYFDD</sequence>
<feature type="chain" id="PRO_1000195305" description="UPF0758 protein Sca_1264">
    <location>
        <begin position="1"/>
        <end position="226"/>
    </location>
</feature>
<feature type="domain" description="MPN" evidence="1">
    <location>
        <begin position="102"/>
        <end position="224"/>
    </location>
</feature>
<feature type="short sequence motif" description="JAMM motif" evidence="1">
    <location>
        <begin position="173"/>
        <end position="186"/>
    </location>
</feature>
<feature type="binding site" evidence="1">
    <location>
        <position position="173"/>
    </location>
    <ligand>
        <name>Zn(2+)</name>
        <dbReference type="ChEBI" id="CHEBI:29105"/>
        <note>catalytic</note>
    </ligand>
</feature>
<feature type="binding site" evidence="1">
    <location>
        <position position="175"/>
    </location>
    <ligand>
        <name>Zn(2+)</name>
        <dbReference type="ChEBI" id="CHEBI:29105"/>
        <note>catalytic</note>
    </ligand>
</feature>
<feature type="binding site" evidence="1">
    <location>
        <position position="186"/>
    </location>
    <ligand>
        <name>Zn(2+)</name>
        <dbReference type="ChEBI" id="CHEBI:29105"/>
        <note>catalytic</note>
    </ligand>
</feature>
<organism>
    <name type="scientific">Staphylococcus carnosus (strain TM300)</name>
    <dbReference type="NCBI Taxonomy" id="396513"/>
    <lineage>
        <taxon>Bacteria</taxon>
        <taxon>Bacillati</taxon>
        <taxon>Bacillota</taxon>
        <taxon>Bacilli</taxon>
        <taxon>Bacillales</taxon>
        <taxon>Staphylococcaceae</taxon>
        <taxon>Staphylococcus</taxon>
    </lineage>
</organism>